<proteinExistence type="evidence at protein level"/>
<dbReference type="EMBL" id="AF008220">
    <property type="protein sequence ID" value="AAC00233.1"/>
    <property type="molecule type" value="Genomic_DNA"/>
</dbReference>
<dbReference type="EMBL" id="AL009126">
    <property type="protein sequence ID" value="CAB15048.1"/>
    <property type="molecule type" value="Genomic_DNA"/>
</dbReference>
<dbReference type="PIR" id="E69993">
    <property type="entry name" value="E69993"/>
</dbReference>
<dbReference type="RefSeq" id="WP_003219346.1">
    <property type="nucleotide sequence ID" value="NZ_OZ025638.1"/>
</dbReference>
<dbReference type="SMR" id="O34967"/>
<dbReference type="FunCoup" id="O34967">
    <property type="interactions" value="105"/>
</dbReference>
<dbReference type="IntAct" id="O34967">
    <property type="interactions" value="1"/>
</dbReference>
<dbReference type="MINT" id="O34967"/>
<dbReference type="STRING" id="224308.BSU30700"/>
<dbReference type="PaxDb" id="224308-BSU30700"/>
<dbReference type="EnsemblBacteria" id="CAB15048">
    <property type="protein sequence ID" value="CAB15048"/>
    <property type="gene ID" value="BSU_30700"/>
</dbReference>
<dbReference type="GeneID" id="937208"/>
<dbReference type="KEGG" id="bsu:BSU30700"/>
<dbReference type="PATRIC" id="fig|224308.179.peg.3328"/>
<dbReference type="eggNOG" id="COG0254">
    <property type="taxonomic scope" value="Bacteria"/>
</dbReference>
<dbReference type="InParanoid" id="O34967"/>
<dbReference type="OrthoDB" id="9803251at2"/>
<dbReference type="PhylomeDB" id="O34967"/>
<dbReference type="BioCyc" id="BSUB:BSU30700-MONOMER"/>
<dbReference type="PRO" id="PR:O34967"/>
<dbReference type="Proteomes" id="UP000001570">
    <property type="component" value="Chromosome"/>
</dbReference>
<dbReference type="GO" id="GO:1990904">
    <property type="term" value="C:ribonucleoprotein complex"/>
    <property type="evidence" value="ECO:0007669"/>
    <property type="project" value="UniProtKB-KW"/>
</dbReference>
<dbReference type="GO" id="GO:0005840">
    <property type="term" value="C:ribosome"/>
    <property type="evidence" value="ECO:0007669"/>
    <property type="project" value="UniProtKB-KW"/>
</dbReference>
<dbReference type="GO" id="GO:0003735">
    <property type="term" value="F:structural constituent of ribosome"/>
    <property type="evidence" value="ECO:0007669"/>
    <property type="project" value="InterPro"/>
</dbReference>
<dbReference type="GO" id="GO:0006412">
    <property type="term" value="P:translation"/>
    <property type="evidence" value="ECO:0007669"/>
    <property type="project" value="UniProtKB-UniRule"/>
</dbReference>
<dbReference type="Gene3D" id="4.10.830.30">
    <property type="entry name" value="Ribosomal protein L31"/>
    <property type="match status" value="1"/>
</dbReference>
<dbReference type="HAMAP" id="MF_00502">
    <property type="entry name" value="Ribosomal_bL31_2"/>
    <property type="match status" value="1"/>
</dbReference>
<dbReference type="InterPro" id="IPR034704">
    <property type="entry name" value="Ribosomal_bL28/bL31-like_sf"/>
</dbReference>
<dbReference type="InterPro" id="IPR002150">
    <property type="entry name" value="Ribosomal_bL31"/>
</dbReference>
<dbReference type="InterPro" id="IPR027493">
    <property type="entry name" value="Ribosomal_bL31_B"/>
</dbReference>
<dbReference type="InterPro" id="IPR042105">
    <property type="entry name" value="Ribosomal_bL31_sf"/>
</dbReference>
<dbReference type="NCBIfam" id="TIGR00105">
    <property type="entry name" value="L31"/>
    <property type="match status" value="1"/>
</dbReference>
<dbReference type="NCBIfam" id="NF002462">
    <property type="entry name" value="PRK01678.1"/>
    <property type="match status" value="1"/>
</dbReference>
<dbReference type="PANTHER" id="PTHR33280">
    <property type="entry name" value="50S RIBOSOMAL PROTEIN L31, CHLOROPLASTIC"/>
    <property type="match status" value="1"/>
</dbReference>
<dbReference type="PANTHER" id="PTHR33280:SF1">
    <property type="entry name" value="LARGE RIBOSOMAL SUBUNIT PROTEIN BL31C"/>
    <property type="match status" value="1"/>
</dbReference>
<dbReference type="Pfam" id="PF01197">
    <property type="entry name" value="Ribosomal_L31"/>
    <property type="match status" value="1"/>
</dbReference>
<dbReference type="PRINTS" id="PR01249">
    <property type="entry name" value="RIBOSOMALL31"/>
</dbReference>
<dbReference type="SUPFAM" id="SSF143800">
    <property type="entry name" value="L28p-like"/>
    <property type="match status" value="1"/>
</dbReference>
<dbReference type="PROSITE" id="PS01143">
    <property type="entry name" value="RIBOSOMAL_L31"/>
    <property type="match status" value="1"/>
</dbReference>
<protein>
    <recommendedName>
        <fullName evidence="2">Large ribosomal subunit protein bL31B</fullName>
    </recommendedName>
    <alternativeName>
        <fullName>50S ribosomal protein L31 type B</fullName>
    </alternativeName>
</protein>
<feature type="chain" id="PRO_0000173204" description="Large ribosomal subunit protein bL31B">
    <location>
        <begin position="1"/>
        <end position="82"/>
    </location>
</feature>
<gene>
    <name type="primary">rpmE2</name>
    <name type="synonym">ytiA</name>
    <name type="ordered locus">BSU30700</name>
</gene>
<reference key="1">
    <citation type="journal article" date="1997" name="Microbiology">
        <title>Sequencing and functional annotation of the Bacillus subtilis genes in the 200 kb rrnB-dnaB region.</title>
        <authorList>
            <person name="Lapidus A."/>
            <person name="Galleron N."/>
            <person name="Sorokin A."/>
            <person name="Ehrlich S.D."/>
        </authorList>
    </citation>
    <scope>NUCLEOTIDE SEQUENCE [GENOMIC DNA]</scope>
    <source>
        <strain>168</strain>
    </source>
</reference>
<reference key="2">
    <citation type="journal article" date="1997" name="Nature">
        <title>The complete genome sequence of the Gram-positive bacterium Bacillus subtilis.</title>
        <authorList>
            <person name="Kunst F."/>
            <person name="Ogasawara N."/>
            <person name="Moszer I."/>
            <person name="Albertini A.M."/>
            <person name="Alloni G."/>
            <person name="Azevedo V."/>
            <person name="Bertero M.G."/>
            <person name="Bessieres P."/>
            <person name="Bolotin A."/>
            <person name="Borchert S."/>
            <person name="Borriss R."/>
            <person name="Boursier L."/>
            <person name="Brans A."/>
            <person name="Braun M."/>
            <person name="Brignell S.C."/>
            <person name="Bron S."/>
            <person name="Brouillet S."/>
            <person name="Bruschi C.V."/>
            <person name="Caldwell B."/>
            <person name="Capuano V."/>
            <person name="Carter N.M."/>
            <person name="Choi S.-K."/>
            <person name="Codani J.-J."/>
            <person name="Connerton I.F."/>
            <person name="Cummings N.J."/>
            <person name="Daniel R.A."/>
            <person name="Denizot F."/>
            <person name="Devine K.M."/>
            <person name="Duesterhoeft A."/>
            <person name="Ehrlich S.D."/>
            <person name="Emmerson P.T."/>
            <person name="Entian K.-D."/>
            <person name="Errington J."/>
            <person name="Fabret C."/>
            <person name="Ferrari E."/>
            <person name="Foulger D."/>
            <person name="Fritz C."/>
            <person name="Fujita M."/>
            <person name="Fujita Y."/>
            <person name="Fuma S."/>
            <person name="Galizzi A."/>
            <person name="Galleron N."/>
            <person name="Ghim S.-Y."/>
            <person name="Glaser P."/>
            <person name="Goffeau A."/>
            <person name="Golightly E.J."/>
            <person name="Grandi G."/>
            <person name="Guiseppi G."/>
            <person name="Guy B.J."/>
            <person name="Haga K."/>
            <person name="Haiech J."/>
            <person name="Harwood C.R."/>
            <person name="Henaut A."/>
            <person name="Hilbert H."/>
            <person name="Holsappel S."/>
            <person name="Hosono S."/>
            <person name="Hullo M.-F."/>
            <person name="Itaya M."/>
            <person name="Jones L.-M."/>
            <person name="Joris B."/>
            <person name="Karamata D."/>
            <person name="Kasahara Y."/>
            <person name="Klaerr-Blanchard M."/>
            <person name="Klein C."/>
            <person name="Kobayashi Y."/>
            <person name="Koetter P."/>
            <person name="Koningstein G."/>
            <person name="Krogh S."/>
            <person name="Kumano M."/>
            <person name="Kurita K."/>
            <person name="Lapidus A."/>
            <person name="Lardinois S."/>
            <person name="Lauber J."/>
            <person name="Lazarevic V."/>
            <person name="Lee S.-M."/>
            <person name="Levine A."/>
            <person name="Liu H."/>
            <person name="Masuda S."/>
            <person name="Mauel C."/>
            <person name="Medigue C."/>
            <person name="Medina N."/>
            <person name="Mellado R.P."/>
            <person name="Mizuno M."/>
            <person name="Moestl D."/>
            <person name="Nakai S."/>
            <person name="Noback M."/>
            <person name="Noone D."/>
            <person name="O'Reilly M."/>
            <person name="Ogawa K."/>
            <person name="Ogiwara A."/>
            <person name="Oudega B."/>
            <person name="Park S.-H."/>
            <person name="Parro V."/>
            <person name="Pohl T.M."/>
            <person name="Portetelle D."/>
            <person name="Porwollik S."/>
            <person name="Prescott A.M."/>
            <person name="Presecan E."/>
            <person name="Pujic P."/>
            <person name="Purnelle B."/>
            <person name="Rapoport G."/>
            <person name="Rey M."/>
            <person name="Reynolds S."/>
            <person name="Rieger M."/>
            <person name="Rivolta C."/>
            <person name="Rocha E."/>
            <person name="Roche B."/>
            <person name="Rose M."/>
            <person name="Sadaie Y."/>
            <person name="Sato T."/>
            <person name="Scanlan E."/>
            <person name="Schleich S."/>
            <person name="Schroeter R."/>
            <person name="Scoffone F."/>
            <person name="Sekiguchi J."/>
            <person name="Sekowska A."/>
            <person name="Seror S.J."/>
            <person name="Serror P."/>
            <person name="Shin B.-S."/>
            <person name="Soldo B."/>
            <person name="Sorokin A."/>
            <person name="Tacconi E."/>
            <person name="Takagi T."/>
            <person name="Takahashi H."/>
            <person name="Takemaru K."/>
            <person name="Takeuchi M."/>
            <person name="Tamakoshi A."/>
            <person name="Tanaka T."/>
            <person name="Terpstra P."/>
            <person name="Tognoni A."/>
            <person name="Tosato V."/>
            <person name="Uchiyama S."/>
            <person name="Vandenbol M."/>
            <person name="Vannier F."/>
            <person name="Vassarotti A."/>
            <person name="Viari A."/>
            <person name="Wambutt R."/>
            <person name="Wedler E."/>
            <person name="Wedler H."/>
            <person name="Weitzenegger T."/>
            <person name="Winters P."/>
            <person name="Wipat A."/>
            <person name="Yamamoto H."/>
            <person name="Yamane K."/>
            <person name="Yasumoto K."/>
            <person name="Yata K."/>
            <person name="Yoshida K."/>
            <person name="Yoshikawa H.-F."/>
            <person name="Zumstein E."/>
            <person name="Yoshikawa H."/>
            <person name="Danchin A."/>
        </authorList>
    </citation>
    <scope>NUCLEOTIDE SEQUENCE [LARGE SCALE GENOMIC DNA]</scope>
    <source>
        <strain>168</strain>
    </source>
</reference>
<reference key="3">
    <citation type="journal article" date="2003" name="Proc. Natl. Acad. Sci. U.S.A.">
        <title>Comparative genomics of bacterial zinc regulons: enhanced ion transport, pathogenesis, and rearrangement of ribosomal proteins.</title>
        <authorList>
            <person name="Panina E.M."/>
            <person name="Mironov A.A."/>
            <person name="Gelfand M.S."/>
        </authorList>
    </citation>
    <scope>DISCUSSION OF POSSIBLE REGULATION</scope>
    <source>
        <strain>168</strain>
    </source>
</reference>
<reference key="4">
    <citation type="journal article" date="2004" name="Mol. Microbiol.">
        <title>Zinc is a key factor in controlling alternation of two types of L31 protein in the Bacillus subtilis ribosome.</title>
        <authorList>
            <person name="Nanamiya H."/>
            <person name="Akanuma G."/>
            <person name="Natori Y."/>
            <person name="Murayama R."/>
            <person name="Kosono S."/>
            <person name="Kudo T."/>
            <person name="Kobayashi K."/>
            <person name="Ogasawara N."/>
            <person name="Park S.-M."/>
            <person name="Ochi K."/>
            <person name="Kawamura F."/>
        </authorList>
    </citation>
    <scope>IDENTIFICATION</scope>
    <scope>CHARACTERIZATION OF GROWTH-PHASE DEPENDENT EXPRESSION</scope>
    <source>
        <strain>168</strain>
    </source>
</reference>
<reference key="5">
    <citation type="journal article" date="2006" name="J. Bacteriol.">
        <title>Liberation of zinc-containing L31 (rpmE) from ribosomes by its paralogous gene product, ytiA, in Bacillus subtilis.</title>
        <authorList>
            <person name="Akanuma G."/>
            <person name="Nanamiya H."/>
            <person name="Natori Y."/>
            <person name="Nomura N."/>
            <person name="Kawamura F."/>
        </authorList>
    </citation>
    <scope>ALTERNATION OF L31 PARALOGS IN THE RIBOSOME</scope>
</reference>
<accession>O34967</accession>
<evidence type="ECO:0000269" key="1">
    <source>
    </source>
</evidence>
<evidence type="ECO:0000305" key="2"/>
<evidence type="ECO:0000305" key="3">
    <source>
    </source>
</evidence>
<name>RL31B_BACSU</name>
<keyword id="KW-1185">Reference proteome</keyword>
<keyword id="KW-0687">Ribonucleoprotein</keyword>
<keyword id="KW-0689">Ribosomal protein</keyword>
<comment type="function">
    <text evidence="1">While neither of the L31 paralogs is essential, this protein does not seem to function as the main L31 protein. Has a higher affinity for 70S ribosomes than the zinc-containing L31 paralog; is able to displace it to varying extents, even under zinc-replete conditions.</text>
</comment>
<comment type="subunit">
    <text evidence="1">Part of the 50S ribosomal subunit after the end of exponential growth.</text>
</comment>
<comment type="induction">
    <text evidence="1 3">Only found in ribosomes after the end of exponential growth. In PubMed:12904577 its expression was predicted to be repressed by the zinc-specific metallo-regulatory protein zur; in PubMed:15049826 it was shown that its expression is indeed repressed by zur.</text>
</comment>
<comment type="similarity">
    <text evidence="2">Belongs to the bacterial ribosomal protein bL31 family. Type B subfamily.</text>
</comment>
<organism>
    <name type="scientific">Bacillus subtilis (strain 168)</name>
    <dbReference type="NCBI Taxonomy" id="224308"/>
    <lineage>
        <taxon>Bacteria</taxon>
        <taxon>Bacillati</taxon>
        <taxon>Bacillota</taxon>
        <taxon>Bacilli</taxon>
        <taxon>Bacillales</taxon>
        <taxon>Bacillaceae</taxon>
        <taxon>Bacillus</taxon>
    </lineage>
</organism>
<sequence length="82" mass="9531">MKEGIHPKNHKVIFQDVNSGYRFLSTSTKTSNETAEWEDGNTYPVIKVEVSSDTHPFYTGRQKFNEKGGRVEQFKKRYNMGK</sequence>